<feature type="chain" id="PRO_0000346206" description="D-ribose pyranase">
    <location>
        <begin position="1"/>
        <end position="136"/>
    </location>
</feature>
<feature type="active site" description="Proton donor" evidence="1">
    <location>
        <position position="20"/>
    </location>
</feature>
<feature type="binding site" evidence="1">
    <location>
        <position position="28"/>
    </location>
    <ligand>
        <name>substrate</name>
    </ligand>
</feature>
<feature type="binding site" evidence="1">
    <location>
        <position position="98"/>
    </location>
    <ligand>
        <name>substrate</name>
    </ligand>
</feature>
<feature type="binding site" evidence="1">
    <location>
        <begin position="120"/>
        <end position="122"/>
    </location>
    <ligand>
        <name>substrate</name>
    </ligand>
</feature>
<accession>Q5KUX2</accession>
<reference key="1">
    <citation type="journal article" date="2004" name="Nucleic Acids Res.">
        <title>Thermoadaptation trait revealed by the genome sequence of thermophilic Geobacillus kaustophilus.</title>
        <authorList>
            <person name="Takami H."/>
            <person name="Takaki Y."/>
            <person name="Chee G.-J."/>
            <person name="Nishi S."/>
            <person name="Shimamura S."/>
            <person name="Suzuki H."/>
            <person name="Matsui S."/>
            <person name="Uchiyama I."/>
        </authorList>
    </citation>
    <scope>NUCLEOTIDE SEQUENCE [LARGE SCALE GENOMIC DNA]</scope>
    <source>
        <strain>HTA426</strain>
    </source>
</reference>
<keyword id="KW-0119">Carbohydrate metabolism</keyword>
<keyword id="KW-0963">Cytoplasm</keyword>
<keyword id="KW-0413">Isomerase</keyword>
<keyword id="KW-1185">Reference proteome</keyword>
<dbReference type="EC" id="5.4.99.62" evidence="1"/>
<dbReference type="EMBL" id="BA000043">
    <property type="protein sequence ID" value="BAD77514.1"/>
    <property type="molecule type" value="Genomic_DNA"/>
</dbReference>
<dbReference type="RefSeq" id="WP_011232699.1">
    <property type="nucleotide sequence ID" value="NC_006510.1"/>
</dbReference>
<dbReference type="SMR" id="Q5KUX2"/>
<dbReference type="STRING" id="235909.GK3229"/>
<dbReference type="GeneID" id="32065115"/>
<dbReference type="KEGG" id="gka:GK3229"/>
<dbReference type="eggNOG" id="COG1869">
    <property type="taxonomic scope" value="Bacteria"/>
</dbReference>
<dbReference type="HOGENOM" id="CLU_135498_0_0_9"/>
<dbReference type="UniPathway" id="UPA00916">
    <property type="reaction ID" value="UER00888"/>
</dbReference>
<dbReference type="Proteomes" id="UP000001172">
    <property type="component" value="Chromosome"/>
</dbReference>
<dbReference type="GO" id="GO:0005829">
    <property type="term" value="C:cytosol"/>
    <property type="evidence" value="ECO:0007669"/>
    <property type="project" value="TreeGrafter"/>
</dbReference>
<dbReference type="GO" id="GO:0062193">
    <property type="term" value="F:D-ribose pyranase activity"/>
    <property type="evidence" value="ECO:0007669"/>
    <property type="project" value="UniProtKB-EC"/>
</dbReference>
<dbReference type="GO" id="GO:0016872">
    <property type="term" value="F:intramolecular lyase activity"/>
    <property type="evidence" value="ECO:0007669"/>
    <property type="project" value="UniProtKB-UniRule"/>
</dbReference>
<dbReference type="GO" id="GO:0048029">
    <property type="term" value="F:monosaccharide binding"/>
    <property type="evidence" value="ECO:0007669"/>
    <property type="project" value="InterPro"/>
</dbReference>
<dbReference type="GO" id="GO:0019303">
    <property type="term" value="P:D-ribose catabolic process"/>
    <property type="evidence" value="ECO:0007669"/>
    <property type="project" value="UniProtKB-UniRule"/>
</dbReference>
<dbReference type="Gene3D" id="3.40.1650.10">
    <property type="entry name" value="RbsD-like domain"/>
    <property type="match status" value="1"/>
</dbReference>
<dbReference type="HAMAP" id="MF_01661">
    <property type="entry name" value="D_rib_pyranase"/>
    <property type="match status" value="1"/>
</dbReference>
<dbReference type="InterPro" id="IPR023064">
    <property type="entry name" value="D-ribose_pyranase"/>
</dbReference>
<dbReference type="InterPro" id="IPR023750">
    <property type="entry name" value="RbsD-like_sf"/>
</dbReference>
<dbReference type="InterPro" id="IPR007721">
    <property type="entry name" value="RbsD_FucU"/>
</dbReference>
<dbReference type="NCBIfam" id="NF008761">
    <property type="entry name" value="PRK11797.1"/>
    <property type="match status" value="1"/>
</dbReference>
<dbReference type="PANTHER" id="PTHR37831">
    <property type="entry name" value="D-RIBOSE PYRANASE"/>
    <property type="match status" value="1"/>
</dbReference>
<dbReference type="PANTHER" id="PTHR37831:SF1">
    <property type="entry name" value="D-RIBOSE PYRANASE"/>
    <property type="match status" value="1"/>
</dbReference>
<dbReference type="Pfam" id="PF05025">
    <property type="entry name" value="RbsD_FucU"/>
    <property type="match status" value="1"/>
</dbReference>
<dbReference type="SUPFAM" id="SSF102546">
    <property type="entry name" value="RbsD-like"/>
    <property type="match status" value="1"/>
</dbReference>
<sequence length="136" mass="14865">MKKSGILNKELNTLLASLGHTDTIVIADCGLPIPNEQARIDLSLVKGFPPFLSVLDAVVDELEIEAIVLAEEIKDQNPDLYESIRARMGGVPVQFVPHEQFKAMTKQAKAVIRTGEATPYANIILRSGVSFSSKDF</sequence>
<proteinExistence type="inferred from homology"/>
<gene>
    <name evidence="1" type="primary">rbsD</name>
    <name type="ordered locus">GK3229</name>
</gene>
<protein>
    <recommendedName>
        <fullName evidence="1">D-ribose pyranase</fullName>
        <ecNumber evidence="1">5.4.99.62</ecNumber>
    </recommendedName>
</protein>
<name>RBSD_GEOKA</name>
<organism>
    <name type="scientific">Geobacillus kaustophilus (strain HTA426)</name>
    <dbReference type="NCBI Taxonomy" id="235909"/>
    <lineage>
        <taxon>Bacteria</taxon>
        <taxon>Bacillati</taxon>
        <taxon>Bacillota</taxon>
        <taxon>Bacilli</taxon>
        <taxon>Bacillales</taxon>
        <taxon>Anoxybacillaceae</taxon>
        <taxon>Geobacillus</taxon>
        <taxon>Geobacillus thermoleovorans group</taxon>
    </lineage>
</organism>
<comment type="function">
    <text evidence="1">Catalyzes the interconversion of beta-pyran and beta-furan forms of D-ribose.</text>
</comment>
<comment type="catalytic activity">
    <reaction evidence="1">
        <text>beta-D-ribopyranose = beta-D-ribofuranose</text>
        <dbReference type="Rhea" id="RHEA:25432"/>
        <dbReference type="ChEBI" id="CHEBI:27476"/>
        <dbReference type="ChEBI" id="CHEBI:47002"/>
        <dbReference type="EC" id="5.4.99.62"/>
    </reaction>
</comment>
<comment type="pathway">
    <text evidence="1">Carbohydrate metabolism; D-ribose degradation; D-ribose 5-phosphate from beta-D-ribopyranose: step 1/2.</text>
</comment>
<comment type="subunit">
    <text evidence="1">Homodecamer.</text>
</comment>
<comment type="subcellular location">
    <subcellularLocation>
        <location evidence="1">Cytoplasm</location>
    </subcellularLocation>
</comment>
<comment type="similarity">
    <text evidence="1">Belongs to the RbsD / FucU family. RbsD subfamily.</text>
</comment>
<evidence type="ECO:0000255" key="1">
    <source>
        <dbReference type="HAMAP-Rule" id="MF_01661"/>
    </source>
</evidence>